<feature type="chain" id="PRO_0000046462" description="DNA polymerase epsilon catalytic subunit A">
    <location>
        <begin position="1"/>
        <end position="2207"/>
    </location>
</feature>
<feature type="zinc finger region" description="CysA-type" evidence="2">
    <location>
        <begin position="2075"/>
        <end position="2116"/>
    </location>
</feature>
<feature type="region of interest" description="Disordered" evidence="3">
    <location>
        <begin position="1"/>
        <end position="20"/>
    </location>
</feature>
<feature type="region of interest" description="Disordered" evidence="3">
    <location>
        <begin position="1201"/>
        <end position="1233"/>
    </location>
</feature>
<feature type="region of interest" description="Disordered" evidence="3">
    <location>
        <begin position="1934"/>
        <end position="1961"/>
    </location>
</feature>
<feature type="short sequence motif" description="CysB motif" evidence="2">
    <location>
        <begin position="2147"/>
        <end position="2164"/>
    </location>
</feature>
<feature type="binding site" evidence="2">
    <location>
        <position position="2075"/>
    </location>
    <ligand>
        <name>Zn(2+)</name>
        <dbReference type="ChEBI" id="CHEBI:29105"/>
    </ligand>
</feature>
<feature type="binding site" evidence="2">
    <location>
        <position position="2078"/>
    </location>
    <ligand>
        <name>Zn(2+)</name>
        <dbReference type="ChEBI" id="CHEBI:29105"/>
    </ligand>
</feature>
<feature type="binding site" evidence="2">
    <location>
        <position position="2113"/>
    </location>
    <ligand>
        <name>Zn(2+)</name>
        <dbReference type="ChEBI" id="CHEBI:29105"/>
    </ligand>
</feature>
<feature type="binding site" evidence="2">
    <location>
        <position position="2116"/>
    </location>
    <ligand>
        <name>Zn(2+)</name>
        <dbReference type="ChEBI" id="CHEBI:29105"/>
    </ligand>
</feature>
<feature type="binding site" evidence="2">
    <location>
        <position position="2147"/>
    </location>
    <ligand>
        <name>[4Fe-4S] cluster</name>
        <dbReference type="ChEBI" id="CHEBI:49883"/>
    </ligand>
</feature>
<feature type="binding site" evidence="2">
    <location>
        <position position="2150"/>
    </location>
    <ligand>
        <name>[4Fe-4S] cluster</name>
        <dbReference type="ChEBI" id="CHEBI:49883"/>
    </ligand>
</feature>
<feature type="binding site" evidence="2">
    <location>
        <position position="2162"/>
    </location>
    <ligand>
        <name>[4Fe-4S] cluster</name>
        <dbReference type="ChEBI" id="CHEBI:49883"/>
    </ligand>
</feature>
<feature type="binding site" evidence="2">
    <location>
        <position position="2164"/>
    </location>
    <ligand>
        <name>[4Fe-4S] cluster</name>
        <dbReference type="ChEBI" id="CHEBI:49883"/>
    </ligand>
</feature>
<feature type="sequence conflict" description="In Ref. 1; AAD01637." evidence="4" ref="1">
    <original>F</original>
    <variation>N</variation>
    <location>
        <position position="1368"/>
    </location>
</feature>
<feature type="sequence conflict" description="In Ref. 1; AAD01637." evidence="4" ref="1">
    <original>V</original>
    <variation>G</variation>
    <location>
        <position position="1607"/>
    </location>
</feature>
<accession>O93845</accession>
<accession>C8VIQ6</accession>
<accession>Q5B8R3</accession>
<dbReference type="EC" id="2.7.7.7" evidence="2"/>
<dbReference type="EMBL" id="AF019254">
    <property type="protein sequence ID" value="AAD01637.1"/>
    <property type="molecule type" value="Genomic_DNA"/>
</dbReference>
<dbReference type="EMBL" id="AACD01000051">
    <property type="protein sequence ID" value="EAA63638.1"/>
    <property type="molecule type" value="Genomic_DNA"/>
</dbReference>
<dbReference type="EMBL" id="BN001306">
    <property type="protein sequence ID" value="CBF83469.1"/>
    <property type="molecule type" value="Genomic_DNA"/>
</dbReference>
<dbReference type="RefSeq" id="XP_660671.1">
    <property type="nucleotide sequence ID" value="XM_655579.1"/>
</dbReference>
<dbReference type="SMR" id="O93845"/>
<dbReference type="FunCoup" id="O93845">
    <property type="interactions" value="691"/>
</dbReference>
<dbReference type="STRING" id="227321.O93845"/>
<dbReference type="EnsemblFungi" id="CBF83469">
    <property type="protein sequence ID" value="CBF83469"/>
    <property type="gene ID" value="ANIA_03067"/>
</dbReference>
<dbReference type="KEGG" id="ani:ANIA_03067"/>
<dbReference type="eggNOG" id="KOG1798">
    <property type="taxonomic scope" value="Eukaryota"/>
</dbReference>
<dbReference type="HOGENOM" id="CLU_000556_0_1_1"/>
<dbReference type="InParanoid" id="O93845"/>
<dbReference type="OMA" id="MLDQCRY"/>
<dbReference type="OrthoDB" id="10060449at2759"/>
<dbReference type="Proteomes" id="UP000000560">
    <property type="component" value="Chromosome VI"/>
</dbReference>
<dbReference type="GO" id="GO:0140445">
    <property type="term" value="C:chromosome, telomeric repeat region"/>
    <property type="evidence" value="ECO:0007669"/>
    <property type="project" value="EnsemblFungi"/>
</dbReference>
<dbReference type="GO" id="GO:0008622">
    <property type="term" value="C:epsilon DNA polymerase complex"/>
    <property type="evidence" value="ECO:0000318"/>
    <property type="project" value="GO_Central"/>
</dbReference>
<dbReference type="GO" id="GO:0043596">
    <property type="term" value="C:nuclear replication fork"/>
    <property type="evidence" value="ECO:0007669"/>
    <property type="project" value="EnsemblFungi"/>
</dbReference>
<dbReference type="GO" id="GO:0051539">
    <property type="term" value="F:4 iron, 4 sulfur cluster binding"/>
    <property type="evidence" value="ECO:0007669"/>
    <property type="project" value="UniProtKB-KW"/>
</dbReference>
<dbReference type="GO" id="GO:0003677">
    <property type="term" value="F:DNA binding"/>
    <property type="evidence" value="ECO:0000318"/>
    <property type="project" value="GO_Central"/>
</dbReference>
<dbReference type="GO" id="GO:0003887">
    <property type="term" value="F:DNA-directed DNA polymerase activity"/>
    <property type="evidence" value="ECO:0000318"/>
    <property type="project" value="GO_Central"/>
</dbReference>
<dbReference type="GO" id="GO:0003690">
    <property type="term" value="F:double-stranded DNA binding"/>
    <property type="evidence" value="ECO:0007669"/>
    <property type="project" value="EnsemblFungi"/>
</dbReference>
<dbReference type="GO" id="GO:0000166">
    <property type="term" value="F:nucleotide binding"/>
    <property type="evidence" value="ECO:0007669"/>
    <property type="project" value="InterPro"/>
</dbReference>
<dbReference type="GO" id="GO:0008310">
    <property type="term" value="F:single-stranded DNA 3'-5' DNA exonuclease activity"/>
    <property type="evidence" value="ECO:0000318"/>
    <property type="project" value="GO_Central"/>
</dbReference>
<dbReference type="GO" id="GO:0003697">
    <property type="term" value="F:single-stranded DNA binding"/>
    <property type="evidence" value="ECO:0007669"/>
    <property type="project" value="EnsemblFungi"/>
</dbReference>
<dbReference type="GO" id="GO:0032183">
    <property type="term" value="F:SUMO binding"/>
    <property type="evidence" value="ECO:0007669"/>
    <property type="project" value="EnsemblFungi"/>
</dbReference>
<dbReference type="GO" id="GO:0008270">
    <property type="term" value="F:zinc ion binding"/>
    <property type="evidence" value="ECO:0007669"/>
    <property type="project" value="UniProtKB-KW"/>
</dbReference>
<dbReference type="GO" id="GO:0006287">
    <property type="term" value="P:base-excision repair, gap-filling"/>
    <property type="evidence" value="ECO:0000318"/>
    <property type="project" value="GO_Central"/>
</dbReference>
<dbReference type="GO" id="GO:0034080">
    <property type="term" value="P:CENP-A containing chromatin assembly"/>
    <property type="evidence" value="ECO:0007669"/>
    <property type="project" value="EnsemblFungi"/>
</dbReference>
<dbReference type="GO" id="GO:0140529">
    <property type="term" value="P:CMG complex assembly"/>
    <property type="evidence" value="ECO:0007669"/>
    <property type="project" value="EnsemblFungi"/>
</dbReference>
<dbReference type="GO" id="GO:0045004">
    <property type="term" value="P:DNA replication proofreading"/>
    <property type="evidence" value="ECO:0000318"/>
    <property type="project" value="GO_Central"/>
</dbReference>
<dbReference type="GO" id="GO:0006303">
    <property type="term" value="P:double-strand break repair via nonhomologous end joining"/>
    <property type="evidence" value="ECO:0007669"/>
    <property type="project" value="EnsemblFungi"/>
</dbReference>
<dbReference type="GO" id="GO:0042276">
    <property type="term" value="P:error-prone translesion synthesis"/>
    <property type="evidence" value="ECO:0007669"/>
    <property type="project" value="EnsemblFungi"/>
</dbReference>
<dbReference type="GO" id="GO:0035822">
    <property type="term" value="P:gene conversion"/>
    <property type="evidence" value="ECO:0007669"/>
    <property type="project" value="EnsemblFungi"/>
</dbReference>
<dbReference type="GO" id="GO:0006272">
    <property type="term" value="P:leading strand elongation"/>
    <property type="evidence" value="ECO:0000318"/>
    <property type="project" value="GO_Central"/>
</dbReference>
<dbReference type="GO" id="GO:0000278">
    <property type="term" value="P:mitotic cell cycle"/>
    <property type="evidence" value="ECO:0000318"/>
    <property type="project" value="GO_Central"/>
</dbReference>
<dbReference type="GO" id="GO:0033314">
    <property type="term" value="P:mitotic DNA replication checkpoint signaling"/>
    <property type="evidence" value="ECO:0007669"/>
    <property type="project" value="EnsemblFungi"/>
</dbReference>
<dbReference type="GO" id="GO:1902975">
    <property type="term" value="P:mitotic DNA replication initiation"/>
    <property type="evidence" value="ECO:0007669"/>
    <property type="project" value="EnsemblFungi"/>
</dbReference>
<dbReference type="GO" id="GO:1903460">
    <property type="term" value="P:mitotic DNA replication leading strand elongation"/>
    <property type="evidence" value="ECO:0007669"/>
    <property type="project" value="EnsemblFungi"/>
</dbReference>
<dbReference type="GO" id="GO:0031573">
    <property type="term" value="P:mitotic intra-S DNA damage checkpoint signaling"/>
    <property type="evidence" value="ECO:0007669"/>
    <property type="project" value="EnsemblFungi"/>
</dbReference>
<dbReference type="GO" id="GO:0007064">
    <property type="term" value="P:mitotic sister chromatid cohesion"/>
    <property type="evidence" value="ECO:0007669"/>
    <property type="project" value="EnsemblFungi"/>
</dbReference>
<dbReference type="GO" id="GO:0006297">
    <property type="term" value="P:nucleotide-excision repair, DNA gap filling"/>
    <property type="evidence" value="ECO:0000318"/>
    <property type="project" value="GO_Central"/>
</dbReference>
<dbReference type="GO" id="GO:0031048">
    <property type="term" value="P:regulatory ncRNA-mediated heterochromatin formation"/>
    <property type="evidence" value="ECO:0007669"/>
    <property type="project" value="EnsemblFungi"/>
</dbReference>
<dbReference type="CDD" id="cd05779">
    <property type="entry name" value="DNA_polB_epsilon_exo"/>
    <property type="match status" value="1"/>
</dbReference>
<dbReference type="CDD" id="cd05535">
    <property type="entry name" value="POLBc_epsilon"/>
    <property type="match status" value="1"/>
</dbReference>
<dbReference type="FunFam" id="1.10.132.60:FF:000002">
    <property type="entry name" value="DNA polymerase epsilon catalytic subunit"/>
    <property type="match status" value="1"/>
</dbReference>
<dbReference type="FunFam" id="1.10.287.690:FF:000005">
    <property type="entry name" value="DNA polymerase epsilon catalytic subunit"/>
    <property type="match status" value="1"/>
</dbReference>
<dbReference type="FunFam" id="3.30.342.10:FF:000005">
    <property type="entry name" value="DNA polymerase epsilon catalytic subunit"/>
    <property type="match status" value="1"/>
</dbReference>
<dbReference type="FunFam" id="3.30.420.10:FF:000015">
    <property type="entry name" value="DNA polymerase epsilon catalytic subunit"/>
    <property type="match status" value="1"/>
</dbReference>
<dbReference type="FunFam" id="3.90.1600.10:FF:000006">
    <property type="entry name" value="DNA polymerase epsilon catalytic subunit"/>
    <property type="match status" value="1"/>
</dbReference>
<dbReference type="Gene3D" id="1.10.132.60">
    <property type="entry name" value="DNA polymerase family B, C-terminal domain"/>
    <property type="match status" value="1"/>
</dbReference>
<dbReference type="Gene3D" id="3.30.342.10">
    <property type="entry name" value="DNA Polymerase, chain B, domain 1"/>
    <property type="match status" value="1"/>
</dbReference>
<dbReference type="Gene3D" id="3.90.1600.10">
    <property type="entry name" value="Palm domain of DNA polymerase"/>
    <property type="match status" value="1"/>
</dbReference>
<dbReference type="Gene3D" id="3.30.420.10">
    <property type="entry name" value="Ribonuclease H-like superfamily/Ribonuclease H"/>
    <property type="match status" value="1"/>
</dbReference>
<dbReference type="InterPro" id="IPR006172">
    <property type="entry name" value="DNA-dir_DNA_pol_B"/>
</dbReference>
<dbReference type="InterPro" id="IPR006133">
    <property type="entry name" value="DNA-dir_DNA_pol_B_exonuc"/>
</dbReference>
<dbReference type="InterPro" id="IPR043502">
    <property type="entry name" value="DNA/RNA_pol_sf"/>
</dbReference>
<dbReference type="InterPro" id="IPR042087">
    <property type="entry name" value="DNA_pol_B_thumb"/>
</dbReference>
<dbReference type="InterPro" id="IPR013697">
    <property type="entry name" value="DNA_pol_e_suA_C"/>
</dbReference>
<dbReference type="InterPro" id="IPR023211">
    <property type="entry name" value="DNA_pol_palm_dom_sf"/>
</dbReference>
<dbReference type="InterPro" id="IPR029703">
    <property type="entry name" value="POL2"/>
</dbReference>
<dbReference type="InterPro" id="IPR055191">
    <property type="entry name" value="POL2_thumb"/>
</dbReference>
<dbReference type="InterPro" id="IPR012337">
    <property type="entry name" value="RNaseH-like_sf"/>
</dbReference>
<dbReference type="InterPro" id="IPR036397">
    <property type="entry name" value="RNaseH_sf"/>
</dbReference>
<dbReference type="InterPro" id="IPR054475">
    <property type="entry name" value="Znf-DPOE"/>
</dbReference>
<dbReference type="PANTHER" id="PTHR10670">
    <property type="entry name" value="DNA POLYMERASE EPSILON CATALYTIC SUBUNIT A"/>
    <property type="match status" value="1"/>
</dbReference>
<dbReference type="PANTHER" id="PTHR10670:SF0">
    <property type="entry name" value="DNA POLYMERASE EPSILON CATALYTIC SUBUNIT A"/>
    <property type="match status" value="1"/>
</dbReference>
<dbReference type="Pfam" id="PF03104">
    <property type="entry name" value="DNA_pol_B_exo1"/>
    <property type="match status" value="1"/>
</dbReference>
<dbReference type="Pfam" id="PF08490">
    <property type="entry name" value="DUF1744"/>
    <property type="match status" value="1"/>
</dbReference>
<dbReference type="Pfam" id="PF22634">
    <property type="entry name" value="POL2_thumb"/>
    <property type="match status" value="1"/>
</dbReference>
<dbReference type="Pfam" id="PF22912">
    <property type="entry name" value="zf-DPOE"/>
    <property type="match status" value="1"/>
</dbReference>
<dbReference type="Pfam" id="PF23250">
    <property type="entry name" value="zf_DPOE_2"/>
    <property type="match status" value="1"/>
</dbReference>
<dbReference type="SMART" id="SM01159">
    <property type="entry name" value="DUF1744"/>
    <property type="match status" value="1"/>
</dbReference>
<dbReference type="SMART" id="SM00486">
    <property type="entry name" value="POLBc"/>
    <property type="match status" value="1"/>
</dbReference>
<dbReference type="SUPFAM" id="SSF56672">
    <property type="entry name" value="DNA/RNA polymerases"/>
    <property type="match status" value="1"/>
</dbReference>
<dbReference type="SUPFAM" id="SSF53098">
    <property type="entry name" value="Ribonuclease H-like"/>
    <property type="match status" value="1"/>
</dbReference>
<evidence type="ECO:0000250" key="1"/>
<evidence type="ECO:0000250" key="2">
    <source>
        <dbReference type="UniProtKB" id="P15436"/>
    </source>
</evidence>
<evidence type="ECO:0000256" key="3">
    <source>
        <dbReference type="SAM" id="MobiDB-lite"/>
    </source>
</evidence>
<evidence type="ECO:0000305" key="4"/>
<keyword id="KW-0004">4Fe-4S</keyword>
<keyword id="KW-0235">DNA replication</keyword>
<keyword id="KW-0238">DNA-binding</keyword>
<keyword id="KW-0239">DNA-directed DNA polymerase</keyword>
<keyword id="KW-0408">Iron</keyword>
<keyword id="KW-0411">Iron-sulfur</keyword>
<keyword id="KW-0479">Metal-binding</keyword>
<keyword id="KW-0548">Nucleotidyltransferase</keyword>
<keyword id="KW-0539">Nucleus</keyword>
<keyword id="KW-1185">Reference proteome</keyword>
<keyword id="KW-0808">Transferase</keyword>
<keyword id="KW-0862">Zinc</keyword>
<keyword id="KW-0863">Zinc-finger</keyword>
<protein>
    <recommendedName>
        <fullName>DNA polymerase epsilon catalytic subunit A</fullName>
        <ecNumber evidence="2">2.7.7.7</ecNumber>
    </recommendedName>
    <alternativeName>
        <fullName>DNA polymerase II subunit A</fullName>
    </alternativeName>
</protein>
<reference key="1">
    <citation type="submission" date="1997-08" db="EMBL/GenBank/DDBJ databases">
        <title>nimP DNA pol epsilon gene of Aspergillus nidulans.</title>
        <authorList>
            <person name="James S.W."/>
            <person name="Crawford G.E."/>
            <person name="Wexler A.N."/>
        </authorList>
    </citation>
    <scope>NUCLEOTIDE SEQUENCE [GENOMIC DNA]</scope>
</reference>
<reference key="2">
    <citation type="journal article" date="2005" name="Nature">
        <title>Sequencing of Aspergillus nidulans and comparative analysis with A. fumigatus and A. oryzae.</title>
        <authorList>
            <person name="Galagan J.E."/>
            <person name="Calvo S.E."/>
            <person name="Cuomo C."/>
            <person name="Ma L.-J."/>
            <person name="Wortman J.R."/>
            <person name="Batzoglou S."/>
            <person name="Lee S.-I."/>
            <person name="Bastuerkmen M."/>
            <person name="Spevak C.C."/>
            <person name="Clutterbuck J."/>
            <person name="Kapitonov V."/>
            <person name="Jurka J."/>
            <person name="Scazzocchio C."/>
            <person name="Farman M.L."/>
            <person name="Butler J."/>
            <person name="Purcell S."/>
            <person name="Harris S."/>
            <person name="Braus G.H."/>
            <person name="Draht O."/>
            <person name="Busch S."/>
            <person name="D'Enfert C."/>
            <person name="Bouchier C."/>
            <person name="Goldman G.H."/>
            <person name="Bell-Pedersen D."/>
            <person name="Griffiths-Jones S."/>
            <person name="Doonan J.H."/>
            <person name="Yu J."/>
            <person name="Vienken K."/>
            <person name="Pain A."/>
            <person name="Freitag M."/>
            <person name="Selker E.U."/>
            <person name="Archer D.B."/>
            <person name="Penalva M.A."/>
            <person name="Oakley B.R."/>
            <person name="Momany M."/>
            <person name="Tanaka T."/>
            <person name="Kumagai T."/>
            <person name="Asai K."/>
            <person name="Machida M."/>
            <person name="Nierman W.C."/>
            <person name="Denning D.W."/>
            <person name="Caddick M.X."/>
            <person name="Hynes M."/>
            <person name="Paoletti M."/>
            <person name="Fischer R."/>
            <person name="Miller B.L."/>
            <person name="Dyer P.S."/>
            <person name="Sachs M.S."/>
            <person name="Osmani S.A."/>
            <person name="Birren B.W."/>
        </authorList>
    </citation>
    <scope>NUCLEOTIDE SEQUENCE [LARGE SCALE GENOMIC DNA]</scope>
    <source>
        <strain>FGSC A4 / ATCC 38163 / CBS 112.46 / NRRL 194 / M139</strain>
    </source>
</reference>
<reference key="3">
    <citation type="journal article" date="2009" name="Fungal Genet. Biol.">
        <title>The 2008 update of the Aspergillus nidulans genome annotation: a community effort.</title>
        <authorList>
            <person name="Wortman J.R."/>
            <person name="Gilsenan J.M."/>
            <person name="Joardar V."/>
            <person name="Deegan J."/>
            <person name="Clutterbuck J."/>
            <person name="Andersen M.R."/>
            <person name="Archer D."/>
            <person name="Bencina M."/>
            <person name="Braus G."/>
            <person name="Coutinho P."/>
            <person name="von Dohren H."/>
            <person name="Doonan J."/>
            <person name="Driessen A.J."/>
            <person name="Durek P."/>
            <person name="Espeso E."/>
            <person name="Fekete E."/>
            <person name="Flipphi M."/>
            <person name="Estrada C.G."/>
            <person name="Geysens S."/>
            <person name="Goldman G."/>
            <person name="de Groot P.W."/>
            <person name="Hansen K."/>
            <person name="Harris S.D."/>
            <person name="Heinekamp T."/>
            <person name="Helmstaedt K."/>
            <person name="Henrissat B."/>
            <person name="Hofmann G."/>
            <person name="Homan T."/>
            <person name="Horio T."/>
            <person name="Horiuchi H."/>
            <person name="James S."/>
            <person name="Jones M."/>
            <person name="Karaffa L."/>
            <person name="Karanyi Z."/>
            <person name="Kato M."/>
            <person name="Keller N."/>
            <person name="Kelly D.E."/>
            <person name="Kiel J.A."/>
            <person name="Kim J.M."/>
            <person name="van der Klei I.J."/>
            <person name="Klis F.M."/>
            <person name="Kovalchuk A."/>
            <person name="Krasevec N."/>
            <person name="Kubicek C.P."/>
            <person name="Liu B."/>
            <person name="Maccabe A."/>
            <person name="Meyer V."/>
            <person name="Mirabito P."/>
            <person name="Miskei M."/>
            <person name="Mos M."/>
            <person name="Mullins J."/>
            <person name="Nelson D.R."/>
            <person name="Nielsen J."/>
            <person name="Oakley B.R."/>
            <person name="Osmani S.A."/>
            <person name="Pakula T."/>
            <person name="Paszewski A."/>
            <person name="Paulsen I."/>
            <person name="Pilsyk S."/>
            <person name="Pocsi I."/>
            <person name="Punt P.J."/>
            <person name="Ram A.F."/>
            <person name="Ren Q."/>
            <person name="Robellet X."/>
            <person name="Robson G."/>
            <person name="Seiboth B."/>
            <person name="van Solingen P."/>
            <person name="Specht T."/>
            <person name="Sun J."/>
            <person name="Taheri-Talesh N."/>
            <person name="Takeshita N."/>
            <person name="Ussery D."/>
            <person name="vanKuyk P.A."/>
            <person name="Visser H."/>
            <person name="van de Vondervoort P.J."/>
            <person name="de Vries R.P."/>
            <person name="Walton J."/>
            <person name="Xiang X."/>
            <person name="Xiong Y."/>
            <person name="Zeng A.P."/>
            <person name="Brandt B.W."/>
            <person name="Cornell M.J."/>
            <person name="van den Hondel C.A."/>
            <person name="Visser J."/>
            <person name="Oliver S.G."/>
            <person name="Turner G."/>
        </authorList>
    </citation>
    <scope>GENOME REANNOTATION</scope>
    <source>
        <strain>FGSC A4 / ATCC 38163 / CBS 112.46 / NRRL 194 / M139</strain>
    </source>
</reference>
<organism>
    <name type="scientific">Emericella nidulans (strain FGSC A4 / ATCC 38163 / CBS 112.46 / NRRL 194 / M139)</name>
    <name type="common">Aspergillus nidulans</name>
    <dbReference type="NCBI Taxonomy" id="227321"/>
    <lineage>
        <taxon>Eukaryota</taxon>
        <taxon>Fungi</taxon>
        <taxon>Dikarya</taxon>
        <taxon>Ascomycota</taxon>
        <taxon>Pezizomycotina</taxon>
        <taxon>Eurotiomycetes</taxon>
        <taxon>Eurotiomycetidae</taxon>
        <taxon>Eurotiales</taxon>
        <taxon>Aspergillaceae</taxon>
        <taxon>Aspergillus</taxon>
        <taxon>Aspergillus subgen. Nidulantes</taxon>
    </lineage>
</organism>
<sequence>MPSRKPSKYGNKFRSGAASFNPKRTKTVEFSSLRSSEATSQDEKFEAIRLANSIDESLGFPRFEAGEKRVGWLINMHSTSIEDPNVPGGRAGVDYYFLDDDGGSFKATVEYDPYFLIAVKTGHEAEVEEWCRRMFEGLIKKIKRVVKEDLKLPNHLLGHRRTFLQLDFANVSHLLEVRKTLLPLAEKNRKNARPNGTTNASDFIIDIREYDVPYHVRVAIDKDIRIGKWYTVEATHGIISLTCLEERLTRADPVVLAFDIETTKLPLKFPDSVIDQIMMISYMIDGQGFLITNREIVSEDIDDFEYTPKPEYSGPFMIFNEPNERAVIERFFEHIKEAKPTVIATYNGDFFDWPFVEARASVLGIDMYKEIGFRKNSEDIYQSDHCAHMDCFAWVNRDSYLPQGSRGLKAVTVAKLGYDPDELDPELMTPYASERPQTLAEYSVSDAVATYYLYMKYIHPFIFSLCTILPLNPDDTLRKGTGTLCEMLLMVQAYKGNIVLPNKHKDPPEAFYEGHLLESETYVGGHVESIEAGVFRSDIPVPFNIDPTAVDELLRDLDAALKFSIEVEEKKSLDDVTNYEEVKGQIAKLLTDLRENPHRNEVPFIYHLDVASMYPNIMITNRLQPDSLIQESNCAACDFNRPGKTCDRRLPWAWRGEFLPAKRDEYNMIRQAVQNERFPGRTKKSPMRAFTELSAEEQAAIVKKRLQDYSKKIYHKIHDSKTMVREAIICQRENPFYVDTVRSFRDRRYDFKGKQKVWKGKTESLKSSGAPAAEIEEAKKMIVLYDSLQLAHKVILNSFYGYVMRKGSRWYSMEMAGVTCLTGARIIQMARELVERIGRPLELDTDGIWCMLPGTFPENFSFTLKNGKKLGISYPCVMLNHLVHGSYTNHQYQSLANPATFRYETHSENSIFFEVDGPYRAMILPTSKEEDKNLKKRYAVFNDDGSLAELKGFEVKRRGELKLIKIFQTQIFKFFLEGTTLAETYAAVARVADRWLDVLYEHGATLADEELIELISENRSMTKTLEEYGNQKSTSITTARRLAEFLGEQMVKDKGLNCKYIISARPRNTPVTERAIPVTIFSAEDSIKRHFLRKWLKDDPGDMDPRSVIDWDYYLERLGSVVQKLITIPAALQKIRNPVPRVAHPEWLQRRINKQDDRFKQVKMTDMFGKSEKNPLSDISTNIIDHRVQHADNLDEAMADSMEKLKSSSPQKASGKRKHPENQTKTSLDPFASLPAKMPSIDDDYVGFLKYQKQKWKIQKQARLRRRQLFGERANTGGDSLSHLFRNQAELLYISTWQVLQLAETSRPGIVRAFVLIDRKIHALTIKVPRCVYINLKQDSLPDVEVPECEVEKVNHTLPNGHPSVHLFKLTLSEETFLREADKIHVLLQHPSVEGVYERNIPLNLRAVLKLGSICTFDEAQRGVLGDGLERGFDLSTLCRTSSEQQYLQDSPLAYHFLYHVSSGEKQIFAIFSSTKNEAHIVILNRARDVQGLPNVDKIYSELLARKLQGQGDQAEGAFQYQEKIHFRTTQITTRRKAYLEVSDLIKKLRNDESLPAIMIIQSQQRSRLCHDIPILKEYPILSVKPEVSDMNLPPLGWQSFIAKRLVTHYLYLSSWVQHLTMLARYGDVPLCNLESDDPRFLIDISYARRLQQNNVVLWWSSTAKPDHAGYEKDDITGPLERVGMPCVNVPGSYTTVCVELEVRNLAINTILTSSIINEAEGADSLLAPSDPSAESSGSGVLYSEKAFASAGAVVLREMVKHWWSEACQGNNMADIMVQHLIRWVESPASCLYDRSLHQYVRMLSRKSFQQLMAEFRRVGSNVVFASPTRLLLQTSKTEVGNAYAYSQYVLKSIRANPSFHFIDLDIKEYWDYLVWYDEYNYGGKGCQEVAETEEQPLETVMHWQLSRFLPTPMQTIFHDWVVEYIELMHSFKRPESDDSSTPRLTQIPIGQPEPGQENEELSAALSDRFSKPLKKQISGLIRRQREELLHPELASDYVFPILPGVLTDPNEEKRNPVLELVKLLMQVLSLSKTTALETRLLRRELLALFEVREFSKEGRFENPGSSLKIPELTCSACCLIRDLDLCRDEDVLPERGSGSGPDSATSSRPWCCPFCQTEYDRLAQEEMLIGQVWGMVVAWQTQDLKCSKCGTLKISEFMEHCSCSGQWTETMNRADIEKRLKVLESVAKFHELKLLQVVVEEVLSQT</sequence>
<name>DPOE_EMENI</name>
<proteinExistence type="inferred from homology"/>
<comment type="function">
    <text evidence="1">DNA polymerase II participates in chromosomal DNA replication.</text>
</comment>
<comment type="catalytic activity">
    <reaction evidence="2">
        <text>DNA(n) + a 2'-deoxyribonucleoside 5'-triphosphate = DNA(n+1) + diphosphate</text>
        <dbReference type="Rhea" id="RHEA:22508"/>
        <dbReference type="Rhea" id="RHEA-COMP:17339"/>
        <dbReference type="Rhea" id="RHEA-COMP:17340"/>
        <dbReference type="ChEBI" id="CHEBI:33019"/>
        <dbReference type="ChEBI" id="CHEBI:61560"/>
        <dbReference type="ChEBI" id="CHEBI:173112"/>
        <dbReference type="EC" id="2.7.7.7"/>
    </reaction>
</comment>
<comment type="cofactor">
    <cofactor evidence="2">
        <name>[4Fe-4S] cluster</name>
        <dbReference type="ChEBI" id="CHEBI:49883"/>
    </cofactor>
    <text evidence="2">Binds 1 [4Fe-4S] cluster.</text>
</comment>
<comment type="subunit">
    <text evidence="1">Heterotetramer. Consists of 4 subunits: pol2, dpb2, dpb3 and dpb4 (By similarity).</text>
</comment>
<comment type="subcellular location">
    <subcellularLocation>
        <location evidence="1">Nucleus</location>
    </subcellularLocation>
</comment>
<comment type="domain">
    <text evidence="2">The CysA-type zinc finger is required for PCNA-binding.</text>
</comment>
<comment type="domain">
    <text evidence="2">The CysB motif binds 1 4Fe-4S cluster and is required for the formation of polymerase complexes.</text>
</comment>
<comment type="similarity">
    <text evidence="4">Belongs to the DNA polymerase type-B family.</text>
</comment>
<gene>
    <name type="primary">pol2</name>
    <name type="synonym">nimP</name>
    <name type="ORF">AN3067</name>
</gene>